<organism>
    <name type="scientific">Candida glabrata (strain ATCC 2001 / BCRC 20586 / JCM 3761 / NBRC 0622 / NRRL Y-65 / CBS 138)</name>
    <name type="common">Yeast</name>
    <name type="synonym">Nakaseomyces glabratus</name>
    <dbReference type="NCBI Taxonomy" id="284593"/>
    <lineage>
        <taxon>Eukaryota</taxon>
        <taxon>Fungi</taxon>
        <taxon>Dikarya</taxon>
        <taxon>Ascomycota</taxon>
        <taxon>Saccharomycotina</taxon>
        <taxon>Saccharomycetes</taxon>
        <taxon>Saccharomycetales</taxon>
        <taxon>Saccharomycetaceae</taxon>
        <taxon>Nakaseomyces</taxon>
    </lineage>
</organism>
<keyword id="KW-0067">ATP-binding</keyword>
<keyword id="KW-0143">Chaperone</keyword>
<keyword id="KW-0963">Cytoplasm</keyword>
<keyword id="KW-0547">Nucleotide-binding</keyword>
<keyword id="KW-1185">Reference proteome</keyword>
<keyword id="KW-0346">Stress response</keyword>
<gene>
    <name type="primary">SSE1</name>
    <name type="ordered locus">CAGL0M06083g</name>
</gene>
<protein>
    <recommendedName>
        <fullName>Heat shock protein homolog SSE1</fullName>
    </recommendedName>
</protein>
<comment type="subcellular location">
    <subcellularLocation>
        <location evidence="1">Cytoplasm</location>
    </subcellularLocation>
</comment>
<comment type="similarity">
    <text evidence="3">Belongs to the heat shock protein 70 family.</text>
</comment>
<name>HSP7F_CANGA</name>
<feature type="chain" id="PRO_0000078393" description="Heat shock protein homolog SSE1">
    <location>
        <begin position="1"/>
        <end position="694"/>
    </location>
</feature>
<feature type="region of interest" description="Disordered" evidence="2">
    <location>
        <begin position="671"/>
        <end position="694"/>
    </location>
</feature>
<feature type="compositionally biased region" description="Basic and acidic residues" evidence="2">
    <location>
        <begin position="675"/>
        <end position="684"/>
    </location>
</feature>
<proteinExistence type="inferred from homology"/>
<sequence length="694" mass="77366">MSTPFGLDFGNDNSVLAVARNRGIDIVVNEVSNRSTPSMVGFGQKNRFLGESAKTKQTSNIKNTVGNLKRILGLDYDHPDFQEESKFFTSKLVKLEDGKIGTQVRFAGESTTFSATQLNAMFINKVKQTVETETKANITDVCIAVPTWYTEEQRYAAADAARIAGLNPVRIVNDITAAGVSYGVFKTDLPEGEEKPRIVAFIDIGHSSYTCSIMAFKKGELKVLGTAWDKNFGGRNFDRAITEHFADEFKTKYKIDIRENPKAYNRVMTSAERLKKVLSANTAAPFSVENVMNDVDASSQLSREELEELVKPMLERVTEPVTKALAQAGLTKDDVDFVEIIGGTTRIPTLKNSISEAFGKPLSTTLNQDEAIAKGAAFICAIHSPTLRVRPFKFEDIHQFSVSYKWDKQVEDEDHLEVFPANSNFPSTKLITLHRSGDFSMEANYTNKEELPPHLDANIAKWDITGVQIPEGETSVPVKLKLRCDPSGLHIIEEAYSLEDIVVKEEVPLPEDAPEDAVPEVKEVTKTVKKDTLEITAHTFTLADDKLNTLIEKENDMTAQDRLVAETEDRKNNLEEYIYTLRGKLDEEYSDFASDAEKTKLKDMLAKAEEWLYEDGFDTIKAKYIAKYEELAAIGNVIRGRYLAKEEEKKQALRAKQEAANLAALSEKLAAQRSADSEAKKDATPEGDAQMDLD</sequence>
<reference key="1">
    <citation type="journal article" date="2004" name="Nature">
        <title>Genome evolution in yeasts.</title>
        <authorList>
            <person name="Dujon B."/>
            <person name="Sherman D."/>
            <person name="Fischer G."/>
            <person name="Durrens P."/>
            <person name="Casaregola S."/>
            <person name="Lafontaine I."/>
            <person name="de Montigny J."/>
            <person name="Marck C."/>
            <person name="Neuveglise C."/>
            <person name="Talla E."/>
            <person name="Goffard N."/>
            <person name="Frangeul L."/>
            <person name="Aigle M."/>
            <person name="Anthouard V."/>
            <person name="Babour A."/>
            <person name="Barbe V."/>
            <person name="Barnay S."/>
            <person name="Blanchin S."/>
            <person name="Beckerich J.-M."/>
            <person name="Beyne E."/>
            <person name="Bleykasten C."/>
            <person name="Boisrame A."/>
            <person name="Boyer J."/>
            <person name="Cattolico L."/>
            <person name="Confanioleri F."/>
            <person name="de Daruvar A."/>
            <person name="Despons L."/>
            <person name="Fabre E."/>
            <person name="Fairhead C."/>
            <person name="Ferry-Dumazet H."/>
            <person name="Groppi A."/>
            <person name="Hantraye F."/>
            <person name="Hennequin C."/>
            <person name="Jauniaux N."/>
            <person name="Joyet P."/>
            <person name="Kachouri R."/>
            <person name="Kerrest A."/>
            <person name="Koszul R."/>
            <person name="Lemaire M."/>
            <person name="Lesur I."/>
            <person name="Ma L."/>
            <person name="Muller H."/>
            <person name="Nicaud J.-M."/>
            <person name="Nikolski M."/>
            <person name="Oztas S."/>
            <person name="Ozier-Kalogeropoulos O."/>
            <person name="Pellenz S."/>
            <person name="Potier S."/>
            <person name="Richard G.-F."/>
            <person name="Straub M.-L."/>
            <person name="Suleau A."/>
            <person name="Swennen D."/>
            <person name="Tekaia F."/>
            <person name="Wesolowski-Louvel M."/>
            <person name="Westhof E."/>
            <person name="Wirth B."/>
            <person name="Zeniou-Meyer M."/>
            <person name="Zivanovic Y."/>
            <person name="Bolotin-Fukuhara M."/>
            <person name="Thierry A."/>
            <person name="Bouchier C."/>
            <person name="Caudron B."/>
            <person name="Scarpelli C."/>
            <person name="Gaillardin C."/>
            <person name="Weissenbach J."/>
            <person name="Wincker P."/>
            <person name="Souciet J.-L."/>
        </authorList>
    </citation>
    <scope>NUCLEOTIDE SEQUENCE [LARGE SCALE GENOMIC DNA]</scope>
    <source>
        <strain>ATCC 2001 / BCRC 20586 / JCM 3761 / NBRC 0622 / NRRL Y-65 / CBS 138</strain>
    </source>
</reference>
<accession>Q6FJI3</accession>
<dbReference type="EMBL" id="CR380959">
    <property type="protein sequence ID" value="CAG62587.1"/>
    <property type="molecule type" value="Genomic_DNA"/>
</dbReference>
<dbReference type="RefSeq" id="XP_449611.1">
    <property type="nucleotide sequence ID" value="XM_449611.1"/>
</dbReference>
<dbReference type="SMR" id="Q6FJI3"/>
<dbReference type="FunCoup" id="Q6FJI3">
    <property type="interactions" value="1361"/>
</dbReference>
<dbReference type="STRING" id="284593.Q6FJI3"/>
<dbReference type="EnsemblFungi" id="CAGL0M06083g-T">
    <property type="protein sequence ID" value="CAGL0M06083g-T-p1"/>
    <property type="gene ID" value="CAGL0M06083g"/>
</dbReference>
<dbReference type="GeneID" id="2891659"/>
<dbReference type="KEGG" id="cgr:2891659"/>
<dbReference type="CGD" id="CAL0136515">
    <property type="gene designation" value="SSE1"/>
</dbReference>
<dbReference type="VEuPathDB" id="FungiDB:B1J91_M06083g"/>
<dbReference type="VEuPathDB" id="FungiDB:CAGL0M06083g"/>
<dbReference type="eggNOG" id="KOG0103">
    <property type="taxonomic scope" value="Eukaryota"/>
</dbReference>
<dbReference type="HOGENOM" id="CLU_005965_5_1_1"/>
<dbReference type="InParanoid" id="Q6FJI3"/>
<dbReference type="OMA" id="WEQSPEI"/>
<dbReference type="Proteomes" id="UP000002428">
    <property type="component" value="Chromosome M"/>
</dbReference>
<dbReference type="GO" id="GO:0005829">
    <property type="term" value="C:cytosol"/>
    <property type="evidence" value="ECO:0000314"/>
    <property type="project" value="CGD"/>
</dbReference>
<dbReference type="GO" id="GO:0062040">
    <property type="term" value="C:fungal biofilm matrix"/>
    <property type="evidence" value="ECO:0000314"/>
    <property type="project" value="CGD"/>
</dbReference>
<dbReference type="GO" id="GO:0005634">
    <property type="term" value="C:nucleus"/>
    <property type="evidence" value="ECO:0007669"/>
    <property type="project" value="TreeGrafter"/>
</dbReference>
<dbReference type="GO" id="GO:0000774">
    <property type="term" value="F:adenyl-nucleotide exchange factor activity"/>
    <property type="evidence" value="ECO:0007669"/>
    <property type="project" value="EnsemblFungi"/>
</dbReference>
<dbReference type="GO" id="GO:0005524">
    <property type="term" value="F:ATP binding"/>
    <property type="evidence" value="ECO:0007669"/>
    <property type="project" value="UniProtKB-KW"/>
</dbReference>
<dbReference type="GO" id="GO:0140662">
    <property type="term" value="F:ATP-dependent protein folding chaperone"/>
    <property type="evidence" value="ECO:0007669"/>
    <property type="project" value="InterPro"/>
</dbReference>
<dbReference type="GO" id="GO:0042277">
    <property type="term" value="F:peptide binding"/>
    <property type="evidence" value="ECO:0007669"/>
    <property type="project" value="EnsemblFungi"/>
</dbReference>
<dbReference type="GO" id="GO:0006914">
    <property type="term" value="P:autophagy"/>
    <property type="evidence" value="ECO:0007669"/>
    <property type="project" value="EnsemblFungi"/>
</dbReference>
<dbReference type="GO" id="GO:0010499">
    <property type="term" value="P:proteasomal ubiquitin-independent protein catabolic process"/>
    <property type="evidence" value="ECO:0007669"/>
    <property type="project" value="EnsemblFungi"/>
</dbReference>
<dbReference type="GO" id="GO:0043161">
    <property type="term" value="P:proteasome-mediated ubiquitin-dependent protein catabolic process"/>
    <property type="evidence" value="ECO:0007669"/>
    <property type="project" value="EnsemblFungi"/>
</dbReference>
<dbReference type="GO" id="GO:0042026">
    <property type="term" value="P:protein refolding"/>
    <property type="evidence" value="ECO:0007669"/>
    <property type="project" value="EnsemblFungi"/>
</dbReference>
<dbReference type="CDD" id="cd24094">
    <property type="entry name" value="ASKHA_NBD_HSP70_ScSse"/>
    <property type="match status" value="1"/>
</dbReference>
<dbReference type="FunFam" id="1.20.1270.10:FF:000002">
    <property type="entry name" value="Heat shock 70 kDa protein 4"/>
    <property type="match status" value="1"/>
</dbReference>
<dbReference type="FunFam" id="3.30.30.30:FF:000002">
    <property type="entry name" value="Heat shock 70 kDa protein 4"/>
    <property type="match status" value="1"/>
</dbReference>
<dbReference type="FunFam" id="3.30.420.40:FF:000171">
    <property type="entry name" value="Heat shock 70 kDa protein 4"/>
    <property type="match status" value="2"/>
</dbReference>
<dbReference type="FunFam" id="3.90.640.10:FF:000004">
    <property type="entry name" value="Heat shock 70 kDa protein 4"/>
    <property type="match status" value="1"/>
</dbReference>
<dbReference type="FunFam" id="2.60.34.10:FF:000020">
    <property type="entry name" value="Heat shock SSE1"/>
    <property type="match status" value="1"/>
</dbReference>
<dbReference type="Gene3D" id="1.20.1270.10">
    <property type="match status" value="1"/>
</dbReference>
<dbReference type="Gene3D" id="3.30.30.30">
    <property type="match status" value="1"/>
</dbReference>
<dbReference type="Gene3D" id="3.30.420.40">
    <property type="match status" value="2"/>
</dbReference>
<dbReference type="Gene3D" id="3.90.640.10">
    <property type="entry name" value="Actin, Chain A, domain 4"/>
    <property type="match status" value="1"/>
</dbReference>
<dbReference type="Gene3D" id="2.60.34.10">
    <property type="entry name" value="Substrate Binding Domain Of DNAk, Chain A, domain 1"/>
    <property type="match status" value="1"/>
</dbReference>
<dbReference type="InterPro" id="IPR043129">
    <property type="entry name" value="ATPase_NBD"/>
</dbReference>
<dbReference type="InterPro" id="IPR018181">
    <property type="entry name" value="Heat_shock_70_CS"/>
</dbReference>
<dbReference type="InterPro" id="IPR029048">
    <property type="entry name" value="HSP70_C_sf"/>
</dbReference>
<dbReference type="InterPro" id="IPR029047">
    <property type="entry name" value="HSP70_peptide-bd_sf"/>
</dbReference>
<dbReference type="InterPro" id="IPR013126">
    <property type="entry name" value="Hsp_70_fam"/>
</dbReference>
<dbReference type="PANTHER" id="PTHR45639:SF4">
    <property type="entry name" value="HSC70CB, ISOFORM G"/>
    <property type="match status" value="1"/>
</dbReference>
<dbReference type="PANTHER" id="PTHR45639">
    <property type="entry name" value="HSC70CB, ISOFORM G-RELATED"/>
    <property type="match status" value="1"/>
</dbReference>
<dbReference type="Pfam" id="PF00012">
    <property type="entry name" value="HSP70"/>
    <property type="match status" value="1"/>
</dbReference>
<dbReference type="PRINTS" id="PR00301">
    <property type="entry name" value="HEATSHOCK70"/>
</dbReference>
<dbReference type="SUPFAM" id="SSF53067">
    <property type="entry name" value="Actin-like ATPase domain"/>
    <property type="match status" value="2"/>
</dbReference>
<dbReference type="SUPFAM" id="SSF100934">
    <property type="entry name" value="Heat shock protein 70kD (HSP70), C-terminal subdomain"/>
    <property type="match status" value="1"/>
</dbReference>
<dbReference type="SUPFAM" id="SSF100920">
    <property type="entry name" value="Heat shock protein 70kD (HSP70), peptide-binding domain"/>
    <property type="match status" value="1"/>
</dbReference>
<dbReference type="PROSITE" id="PS00329">
    <property type="entry name" value="HSP70_2"/>
    <property type="match status" value="1"/>
</dbReference>
<evidence type="ECO:0000250" key="1"/>
<evidence type="ECO:0000256" key="2">
    <source>
        <dbReference type="SAM" id="MobiDB-lite"/>
    </source>
</evidence>
<evidence type="ECO:0000305" key="3"/>